<dbReference type="EMBL" id="BX548174">
    <property type="protein sequence ID" value="CAE18940.1"/>
    <property type="molecule type" value="Genomic_DNA"/>
</dbReference>
<dbReference type="RefSeq" id="WP_011132116.1">
    <property type="nucleotide sequence ID" value="NC_005072.1"/>
</dbReference>
<dbReference type="SMR" id="Q7V2J5"/>
<dbReference type="STRING" id="59919.PMM0481"/>
<dbReference type="KEGG" id="pmm:PMM0481"/>
<dbReference type="eggNOG" id="COG1666">
    <property type="taxonomic scope" value="Bacteria"/>
</dbReference>
<dbReference type="HOGENOM" id="CLU_099839_0_0_3"/>
<dbReference type="OrthoDB" id="9801447at2"/>
<dbReference type="Proteomes" id="UP000001026">
    <property type="component" value="Chromosome"/>
</dbReference>
<dbReference type="GO" id="GO:0005829">
    <property type="term" value="C:cytosol"/>
    <property type="evidence" value="ECO:0007669"/>
    <property type="project" value="TreeGrafter"/>
</dbReference>
<dbReference type="GO" id="GO:0000166">
    <property type="term" value="F:nucleotide binding"/>
    <property type="evidence" value="ECO:0007669"/>
    <property type="project" value="TreeGrafter"/>
</dbReference>
<dbReference type="CDD" id="cd11740">
    <property type="entry name" value="YajQ_like"/>
    <property type="match status" value="1"/>
</dbReference>
<dbReference type="Gene3D" id="3.30.70.860">
    <property type="match status" value="1"/>
</dbReference>
<dbReference type="Gene3D" id="3.30.70.990">
    <property type="entry name" value="YajQ-like, domain 2"/>
    <property type="match status" value="1"/>
</dbReference>
<dbReference type="HAMAP" id="MF_00632">
    <property type="entry name" value="YajQ"/>
    <property type="match status" value="1"/>
</dbReference>
<dbReference type="InterPro" id="IPR007551">
    <property type="entry name" value="DUF520"/>
</dbReference>
<dbReference type="InterPro" id="IPR035571">
    <property type="entry name" value="UPF0234-like_C"/>
</dbReference>
<dbReference type="InterPro" id="IPR035570">
    <property type="entry name" value="UPF0234_N"/>
</dbReference>
<dbReference type="InterPro" id="IPR036183">
    <property type="entry name" value="YajQ-like_sf"/>
</dbReference>
<dbReference type="NCBIfam" id="NF003819">
    <property type="entry name" value="PRK05412.1"/>
    <property type="match status" value="1"/>
</dbReference>
<dbReference type="PANTHER" id="PTHR30476">
    <property type="entry name" value="UPF0234 PROTEIN YAJQ"/>
    <property type="match status" value="1"/>
</dbReference>
<dbReference type="PANTHER" id="PTHR30476:SF0">
    <property type="entry name" value="UPF0234 PROTEIN YAJQ"/>
    <property type="match status" value="1"/>
</dbReference>
<dbReference type="Pfam" id="PF04461">
    <property type="entry name" value="DUF520"/>
    <property type="match status" value="1"/>
</dbReference>
<dbReference type="SUPFAM" id="SSF89963">
    <property type="entry name" value="YajQ-like"/>
    <property type="match status" value="2"/>
</dbReference>
<organism>
    <name type="scientific">Prochlorococcus marinus subsp. pastoris (strain CCMP1986 / NIES-2087 / MED4)</name>
    <dbReference type="NCBI Taxonomy" id="59919"/>
    <lineage>
        <taxon>Bacteria</taxon>
        <taxon>Bacillati</taxon>
        <taxon>Cyanobacteriota</taxon>
        <taxon>Cyanophyceae</taxon>
        <taxon>Synechococcales</taxon>
        <taxon>Prochlorococcaceae</taxon>
        <taxon>Prochlorococcus</taxon>
    </lineage>
</organism>
<accession>Q7V2J5</accession>
<reference key="1">
    <citation type="journal article" date="2003" name="Nature">
        <title>Genome divergence in two Prochlorococcus ecotypes reflects oceanic niche differentiation.</title>
        <authorList>
            <person name="Rocap G."/>
            <person name="Larimer F.W."/>
            <person name="Lamerdin J.E."/>
            <person name="Malfatti S."/>
            <person name="Chain P."/>
            <person name="Ahlgren N.A."/>
            <person name="Arellano A."/>
            <person name="Coleman M."/>
            <person name="Hauser L."/>
            <person name="Hess W.R."/>
            <person name="Johnson Z.I."/>
            <person name="Land M.L."/>
            <person name="Lindell D."/>
            <person name="Post A.F."/>
            <person name="Regala W."/>
            <person name="Shah M."/>
            <person name="Shaw S.L."/>
            <person name="Steglich C."/>
            <person name="Sullivan M.B."/>
            <person name="Ting C.S."/>
            <person name="Tolonen A."/>
            <person name="Webb E.A."/>
            <person name="Zinser E.R."/>
            <person name="Chisholm S.W."/>
        </authorList>
    </citation>
    <scope>NUCLEOTIDE SEQUENCE [LARGE SCALE GENOMIC DNA]</scope>
    <source>
        <strain>CCMP1986 / NIES-2087 / MED4</strain>
    </source>
</reference>
<evidence type="ECO:0000255" key="1">
    <source>
        <dbReference type="HAMAP-Rule" id="MF_00632"/>
    </source>
</evidence>
<proteinExistence type="inferred from homology"/>
<feature type="chain" id="PRO_1000147318" description="Nucleotide-binding protein PMM0481">
    <location>
        <begin position="1"/>
        <end position="165"/>
    </location>
</feature>
<name>Y481_PROMP</name>
<protein>
    <recommendedName>
        <fullName evidence="1">Nucleotide-binding protein PMM0481</fullName>
    </recommendedName>
</protein>
<gene>
    <name type="ordered locus">PMM0481</name>
</gene>
<keyword id="KW-0547">Nucleotide-binding</keyword>
<sequence>MAENFSFDVVSDFDRQELVNALDQVKREISQRYDLKGTDTSLDLEKDNIFITTNSELTLNSVIDIIRQKAIKRKLSIKIFDFNSIEVVSGNKVKQTITLKKGLNQEIAKKISKNIRDEIKKINVSINGETLRVMSKSKNDLQLAIKLLENLEETYKIPLQTNNYR</sequence>
<comment type="function">
    <text evidence="1">Nucleotide-binding protein.</text>
</comment>
<comment type="similarity">
    <text evidence="1">Belongs to the YajQ family.</text>
</comment>